<feature type="initiator methionine" description="Removed" evidence="8">
    <location>
        <position position="1"/>
    </location>
</feature>
<feature type="chain" id="PRO_0000086368" description="Dual specificity mitogen-activated protein kinase kinase 1">
    <location>
        <begin position="2"/>
        <end position="393"/>
    </location>
</feature>
<feature type="domain" description="Protein kinase" evidence="5">
    <location>
        <begin position="68"/>
        <end position="361"/>
    </location>
</feature>
<feature type="region of interest" description="Disordered" evidence="7">
    <location>
        <begin position="1"/>
        <end position="27"/>
    </location>
</feature>
<feature type="region of interest" description="RAF1-binding" evidence="1">
    <location>
        <begin position="270"/>
        <end position="307"/>
    </location>
</feature>
<feature type="active site" description="Proton acceptor" evidence="5 6">
    <location>
        <position position="190"/>
    </location>
</feature>
<feature type="binding site" evidence="5 9">
    <location>
        <begin position="74"/>
        <end position="82"/>
    </location>
    <ligand>
        <name>ATP</name>
        <dbReference type="ChEBI" id="CHEBI:30616"/>
    </ligand>
</feature>
<feature type="binding site" evidence="5 9">
    <location>
        <position position="97"/>
    </location>
    <ligand>
        <name>ATP</name>
        <dbReference type="ChEBI" id="CHEBI:30616"/>
    </ligand>
</feature>
<feature type="site" description="Cleavage; by anthrax lethal factor" evidence="1">
    <location>
        <begin position="8"/>
        <end position="9"/>
    </location>
</feature>
<feature type="modified residue" description="Phosphoserine; by RAF" evidence="10">
    <location>
        <position position="218"/>
    </location>
</feature>
<feature type="modified residue" description="Phosphoserine; by RAF" evidence="10">
    <location>
        <position position="222"/>
    </location>
</feature>
<feature type="modified residue" description="Phosphothreonine" evidence="4">
    <location>
        <position position="286"/>
    </location>
</feature>
<feature type="modified residue" description="Phosphothreonine; by MAPK1" evidence="3">
    <location>
        <position position="292"/>
    </location>
</feature>
<feature type="modified residue" description="Phosphoserine; by PAK" evidence="4">
    <location>
        <position position="298"/>
    </location>
</feature>
<feature type="helix" evidence="12">
    <location>
        <begin position="44"/>
        <end position="53"/>
    </location>
</feature>
<feature type="turn" evidence="12">
    <location>
        <begin position="54"/>
        <end position="59"/>
    </location>
</feature>
<feature type="helix" evidence="12">
    <location>
        <begin position="65"/>
        <end position="67"/>
    </location>
</feature>
<feature type="strand" evidence="12">
    <location>
        <begin position="68"/>
        <end position="73"/>
    </location>
</feature>
<feature type="strand" evidence="12">
    <location>
        <begin position="82"/>
        <end position="90"/>
    </location>
</feature>
<feature type="strand" evidence="12">
    <location>
        <begin position="93"/>
        <end position="97"/>
    </location>
</feature>
<feature type="helix" evidence="12">
    <location>
        <begin position="106"/>
        <end position="115"/>
    </location>
</feature>
<feature type="helix" evidence="12">
    <location>
        <begin position="117"/>
        <end position="120"/>
    </location>
</feature>
<feature type="strand" evidence="12">
    <location>
        <begin position="129"/>
        <end position="134"/>
    </location>
</feature>
<feature type="strand" evidence="12">
    <location>
        <begin position="136"/>
        <end position="144"/>
    </location>
</feature>
<feature type="strand" evidence="12">
    <location>
        <begin position="147"/>
        <end position="150"/>
    </location>
</feature>
<feature type="helix" evidence="12">
    <location>
        <begin position="151"/>
        <end position="157"/>
    </location>
</feature>
<feature type="strand" evidence="12">
    <location>
        <begin position="158"/>
        <end position="160"/>
    </location>
</feature>
<feature type="helix" evidence="12">
    <location>
        <begin position="163"/>
        <end position="184"/>
    </location>
</feature>
<feature type="helix" evidence="12">
    <location>
        <begin position="193"/>
        <end position="195"/>
    </location>
</feature>
<feature type="strand" evidence="12">
    <location>
        <begin position="196"/>
        <end position="198"/>
    </location>
</feature>
<feature type="strand" evidence="12">
    <location>
        <begin position="204"/>
        <end position="206"/>
    </location>
</feature>
<feature type="helix" evidence="12">
    <location>
        <begin position="213"/>
        <end position="218"/>
    </location>
</feature>
<feature type="strand" evidence="12">
    <location>
        <begin position="221"/>
        <end position="226"/>
    </location>
</feature>
<feature type="helix" evidence="12">
    <location>
        <begin position="232"/>
        <end position="235"/>
    </location>
</feature>
<feature type="helix" evidence="12">
    <location>
        <begin position="243"/>
        <end position="258"/>
    </location>
</feature>
<feature type="helix" evidence="12">
    <location>
        <begin position="268"/>
        <end position="274"/>
    </location>
</feature>
<feature type="helix" evidence="12">
    <location>
        <begin position="310"/>
        <end position="319"/>
    </location>
</feature>
<feature type="turn" evidence="12">
    <location>
        <begin position="327"/>
        <end position="329"/>
    </location>
</feature>
<feature type="helix" evidence="12">
    <location>
        <begin position="332"/>
        <end position="341"/>
    </location>
</feature>
<feature type="turn" evidence="12">
    <location>
        <begin position="346"/>
        <end position="348"/>
    </location>
</feature>
<feature type="turn" evidence="12">
    <location>
        <begin position="352"/>
        <end position="357"/>
    </location>
</feature>
<feature type="helix" evidence="12">
    <location>
        <begin position="359"/>
        <end position="365"/>
    </location>
</feature>
<feature type="helix" evidence="12">
    <location>
        <begin position="371"/>
        <end position="379"/>
    </location>
</feature>
<evidence type="ECO:0000250" key="1"/>
<evidence type="ECO:0000250" key="2">
    <source>
        <dbReference type="UniProtKB" id="P31938"/>
    </source>
</evidence>
<evidence type="ECO:0000250" key="3">
    <source>
        <dbReference type="UniProtKB" id="Q01986"/>
    </source>
</evidence>
<evidence type="ECO:0000250" key="4">
    <source>
        <dbReference type="UniProtKB" id="Q02750"/>
    </source>
</evidence>
<evidence type="ECO:0000255" key="5">
    <source>
        <dbReference type="PROSITE-ProRule" id="PRU00159"/>
    </source>
</evidence>
<evidence type="ECO:0000255" key="6">
    <source>
        <dbReference type="PROSITE-ProRule" id="PRU10027"/>
    </source>
</evidence>
<evidence type="ECO:0000256" key="7">
    <source>
        <dbReference type="SAM" id="MobiDB-lite"/>
    </source>
</evidence>
<evidence type="ECO:0000269" key="8">
    <source>
    </source>
</evidence>
<evidence type="ECO:0000269" key="9">
    <source>
    </source>
</evidence>
<evidence type="ECO:0000269" key="10">
    <source>
    </source>
</evidence>
<evidence type="ECO:0000305" key="11"/>
<evidence type="ECO:0007829" key="12">
    <source>
        <dbReference type="PDB" id="7JUR"/>
    </source>
</evidence>
<accession>P29678</accession>
<reference key="1">
    <citation type="journal article" date="1994" name="EMBO J.">
        <title>Identification of the sites in MAP kinase kinase-1 phosphorylated by p74raf-1.</title>
        <authorList>
            <person name="Alessi D.R."/>
            <person name="Saito Y."/>
            <person name="Campbell D.G."/>
            <person name="Cohen P."/>
            <person name="Sithanadam G."/>
            <person name="Rapp U."/>
            <person name="Ashworth A."/>
            <person name="Marshall C.J."/>
            <person name="Cowley S."/>
        </authorList>
    </citation>
    <scope>NUCLEOTIDE SEQUENCE [MRNA]</scope>
    <scope>PHOSPHORYLATION AT SER-218 AND SER-222 BY RAF</scope>
</reference>
<reference key="2">
    <citation type="journal article" date="1992" name="Oncogene">
        <title>The amino acid sequence of a mammalian MAP kinase kinase.</title>
        <authorList>
            <person name="Ashworth A."/>
            <person name="Nakielny S."/>
            <person name="Cohen P."/>
            <person name="Marshall C."/>
        </authorList>
    </citation>
    <scope>NUCLEOTIDE SEQUENCE [MRNA] OF 16-393</scope>
    <scope>PARTIAL PROTEIN SEQUENCE</scope>
    <source>
        <tissue>Brain</tissue>
        <tissue>Skeletal muscle</tissue>
    </source>
</reference>
<reference key="3">
    <citation type="journal article" date="1992" name="FEBS Lett.">
        <title>MAP kinase kinase from rabbit skeletal muscle. A novel dual specificity enzyme showing homology to yeast protein kinases involved in pheromone-dependent signal transduction.</title>
        <authorList>
            <person name="Nakielny S."/>
            <person name="Campbell D.G."/>
            <person name="Cohen P."/>
        </authorList>
    </citation>
    <scope>PROTEIN SEQUENCE OF 2-16; 85-96 AND 190-201</scope>
    <source>
        <tissue>Skeletal muscle</tissue>
    </source>
</reference>
<reference key="4">
    <citation type="journal article" date="1992" name="Biochem. J.">
        <title>Renaturation and partial peptide sequencing of mitogen-activated protein kinase (MAP kinase) activator from rabbit skeletal muscle.</title>
        <authorList>
            <person name="Wu J."/>
            <person name="Michel H."/>
            <person name="Rossomando A."/>
            <person name="Haystead T."/>
            <person name="Shabanowitz J."/>
            <person name="Hunt D.F."/>
            <person name="Sturgill T.W."/>
        </authorList>
    </citation>
    <scope>PROTEIN SEQUENCE OF 85-96 AND 190-201</scope>
    <source>
        <tissue>Skeletal muscle</tissue>
    </source>
</reference>
<reference key="5">
    <citation type="journal article" date="2011" name="Nature">
        <title>A Raf-induced allosteric transition of KSR stimulates phosphorylation of MEK.</title>
        <authorList>
            <person name="Brennan D.F."/>
            <person name="Dar A.C."/>
            <person name="Hertz N.T."/>
            <person name="Chao W.C."/>
            <person name="Burlingame A.L."/>
            <person name="Shokat K.M."/>
            <person name="Barford D."/>
        </authorList>
    </citation>
    <scope>X-RAY CRYSTALLOGRAPHY (3.46 ANGSTROMS) IN COMPLEX WITH ATP AND HUMAN KSR2</scope>
    <scope>PHOSPHORYLATION</scope>
</reference>
<keyword id="KW-0002">3D-structure</keyword>
<keyword id="KW-0067">ATP-binding</keyword>
<keyword id="KW-0963">Cytoplasm</keyword>
<keyword id="KW-0206">Cytoskeleton</keyword>
<keyword id="KW-0903">Direct protein sequencing</keyword>
<keyword id="KW-0418">Kinase</keyword>
<keyword id="KW-0472">Membrane</keyword>
<keyword id="KW-0547">Nucleotide-binding</keyword>
<keyword id="KW-0539">Nucleus</keyword>
<keyword id="KW-0597">Phosphoprotein</keyword>
<keyword id="KW-1185">Reference proteome</keyword>
<keyword id="KW-0723">Serine/threonine-protein kinase</keyword>
<keyword id="KW-0808">Transferase</keyword>
<keyword id="KW-0829">Tyrosine-protein kinase</keyword>
<proteinExistence type="evidence at protein level"/>
<dbReference type="EC" id="2.7.12.2"/>
<dbReference type="EMBL" id="Z30163">
    <property type="protein sequence ID" value="CAA82912.1"/>
    <property type="molecule type" value="mRNA"/>
</dbReference>
<dbReference type="PIR" id="S42068">
    <property type="entry name" value="S42068"/>
</dbReference>
<dbReference type="RefSeq" id="NP_001076098.1">
    <property type="nucleotide sequence ID" value="NM_001082629.1"/>
</dbReference>
<dbReference type="PDB" id="2Y4I">
    <property type="method" value="X-ray"/>
    <property type="resolution" value="3.46 A"/>
    <property type="chains" value="C=1-393"/>
</dbReference>
<dbReference type="PDB" id="5KKR">
    <property type="method" value="X-ray"/>
    <property type="resolution" value="3.51 A"/>
    <property type="chains" value="C=1-393"/>
</dbReference>
<dbReference type="PDB" id="7JUQ">
    <property type="method" value="X-ray"/>
    <property type="resolution" value="3.22 A"/>
    <property type="chains" value="C=35-393"/>
</dbReference>
<dbReference type="PDB" id="7JUR">
    <property type="method" value="X-ray"/>
    <property type="resolution" value="2.82 A"/>
    <property type="chains" value="C=35-393"/>
</dbReference>
<dbReference type="PDB" id="7JUS">
    <property type="method" value="X-ray"/>
    <property type="resolution" value="2.99 A"/>
    <property type="chains" value="C=35-393"/>
</dbReference>
<dbReference type="PDB" id="7JUT">
    <property type="method" value="X-ray"/>
    <property type="resolution" value="3.09 A"/>
    <property type="chains" value="C=35-393"/>
</dbReference>
<dbReference type="PDB" id="7JUU">
    <property type="method" value="X-ray"/>
    <property type="resolution" value="3.19 A"/>
    <property type="chains" value="C=35-393"/>
</dbReference>
<dbReference type="PDB" id="7JUV">
    <property type="method" value="X-ray"/>
    <property type="resolution" value="3.36 A"/>
    <property type="chains" value="C=35-393"/>
</dbReference>
<dbReference type="PDB" id="7JUW">
    <property type="method" value="X-ray"/>
    <property type="resolution" value="2.88 A"/>
    <property type="chains" value="C=35-393"/>
</dbReference>
<dbReference type="PDB" id="7JUX">
    <property type="method" value="X-ray"/>
    <property type="resolution" value="3.34 A"/>
    <property type="chains" value="C=35-393"/>
</dbReference>
<dbReference type="PDB" id="7JUY">
    <property type="method" value="X-ray"/>
    <property type="resolution" value="3.10 A"/>
    <property type="chains" value="C=35-393"/>
</dbReference>
<dbReference type="PDB" id="7JUZ">
    <property type="method" value="X-ray"/>
    <property type="resolution" value="3.21 A"/>
    <property type="chains" value="C=35-393"/>
</dbReference>
<dbReference type="PDB" id="7JV0">
    <property type="method" value="X-ray"/>
    <property type="resolution" value="3.63 A"/>
    <property type="chains" value="C=35-393"/>
</dbReference>
<dbReference type="PDB" id="7JV1">
    <property type="method" value="X-ray"/>
    <property type="resolution" value="3.62 A"/>
    <property type="chains" value="C=35-393"/>
</dbReference>
<dbReference type="PDBsum" id="2Y4I"/>
<dbReference type="PDBsum" id="5KKR"/>
<dbReference type="PDBsum" id="7JUQ"/>
<dbReference type="PDBsum" id="7JUR"/>
<dbReference type="PDBsum" id="7JUS"/>
<dbReference type="PDBsum" id="7JUT"/>
<dbReference type="PDBsum" id="7JUU"/>
<dbReference type="PDBsum" id="7JUV"/>
<dbReference type="PDBsum" id="7JUW"/>
<dbReference type="PDBsum" id="7JUX"/>
<dbReference type="PDBsum" id="7JUY"/>
<dbReference type="PDBsum" id="7JUZ"/>
<dbReference type="PDBsum" id="7JV0"/>
<dbReference type="PDBsum" id="7JV1"/>
<dbReference type="SMR" id="P29678"/>
<dbReference type="DIP" id="DIP-40535N"/>
<dbReference type="FunCoup" id="P29678">
    <property type="interactions" value="1995"/>
</dbReference>
<dbReference type="IntAct" id="P29678">
    <property type="interactions" value="3"/>
</dbReference>
<dbReference type="STRING" id="9986.ENSOCUP00000029057"/>
<dbReference type="BindingDB" id="P29678"/>
<dbReference type="ChEMBL" id="CHEMBL5740"/>
<dbReference type="iPTMnet" id="P29678"/>
<dbReference type="PaxDb" id="9986-ENSOCUP00000007582"/>
<dbReference type="GeneID" id="100009316"/>
<dbReference type="KEGG" id="ocu:100009316"/>
<dbReference type="CTD" id="5604"/>
<dbReference type="eggNOG" id="KOG0581">
    <property type="taxonomic scope" value="Eukaryota"/>
</dbReference>
<dbReference type="InParanoid" id="P29678"/>
<dbReference type="OrthoDB" id="10252354at2759"/>
<dbReference type="BRENDA" id="2.7.12.2">
    <property type="organism ID" value="1749"/>
</dbReference>
<dbReference type="EvolutionaryTrace" id="P29678"/>
<dbReference type="PRO" id="PR:P29678"/>
<dbReference type="Proteomes" id="UP000001811">
    <property type="component" value="Unplaced"/>
</dbReference>
<dbReference type="GO" id="GO:0005813">
    <property type="term" value="C:centrosome"/>
    <property type="evidence" value="ECO:0007669"/>
    <property type="project" value="UniProtKB-SubCell"/>
</dbReference>
<dbReference type="GO" id="GO:0005769">
    <property type="term" value="C:early endosome"/>
    <property type="evidence" value="ECO:0007669"/>
    <property type="project" value="UniProtKB-ARBA"/>
</dbReference>
<dbReference type="GO" id="GO:0005925">
    <property type="term" value="C:focal adhesion"/>
    <property type="evidence" value="ECO:0007669"/>
    <property type="project" value="UniProtKB-ARBA"/>
</dbReference>
<dbReference type="GO" id="GO:0005770">
    <property type="term" value="C:late endosome"/>
    <property type="evidence" value="ECO:0007669"/>
    <property type="project" value="UniProtKB-ARBA"/>
</dbReference>
<dbReference type="GO" id="GO:0016020">
    <property type="term" value="C:membrane"/>
    <property type="evidence" value="ECO:0007669"/>
    <property type="project" value="UniProtKB-SubCell"/>
</dbReference>
<dbReference type="GO" id="GO:0005739">
    <property type="term" value="C:mitochondrion"/>
    <property type="evidence" value="ECO:0007669"/>
    <property type="project" value="UniProtKB-ARBA"/>
</dbReference>
<dbReference type="GO" id="GO:0005634">
    <property type="term" value="C:nucleus"/>
    <property type="evidence" value="ECO:0007669"/>
    <property type="project" value="UniProtKB-SubCell"/>
</dbReference>
<dbReference type="GO" id="GO:0005524">
    <property type="term" value="F:ATP binding"/>
    <property type="evidence" value="ECO:0007669"/>
    <property type="project" value="UniProtKB-KW"/>
</dbReference>
<dbReference type="GO" id="GO:0004708">
    <property type="term" value="F:MAP kinase kinase activity"/>
    <property type="evidence" value="ECO:0007669"/>
    <property type="project" value="UniProtKB-EC"/>
</dbReference>
<dbReference type="GO" id="GO:0106310">
    <property type="term" value="F:protein serine kinase activity"/>
    <property type="evidence" value="ECO:0007669"/>
    <property type="project" value="RHEA"/>
</dbReference>
<dbReference type="GO" id="GO:0004674">
    <property type="term" value="F:protein serine/threonine kinase activity"/>
    <property type="evidence" value="ECO:0007669"/>
    <property type="project" value="UniProtKB-KW"/>
</dbReference>
<dbReference type="GO" id="GO:0004713">
    <property type="term" value="F:protein tyrosine kinase activity"/>
    <property type="evidence" value="ECO:0007669"/>
    <property type="project" value="UniProtKB-KW"/>
</dbReference>
<dbReference type="GO" id="GO:2000641">
    <property type="term" value="P:regulation of early endosome to late endosome transport"/>
    <property type="evidence" value="ECO:0007669"/>
    <property type="project" value="UniProtKB-ARBA"/>
</dbReference>
<dbReference type="GO" id="GO:0090170">
    <property type="term" value="P:regulation of Golgi inheritance"/>
    <property type="evidence" value="ECO:0007669"/>
    <property type="project" value="UniProtKB-ARBA"/>
</dbReference>
<dbReference type="GO" id="GO:0032872">
    <property type="term" value="P:regulation of stress-activated MAPK cascade"/>
    <property type="evidence" value="ECO:0007669"/>
    <property type="project" value="UniProtKB-ARBA"/>
</dbReference>
<dbReference type="CDD" id="cd06650">
    <property type="entry name" value="PKc_MEK1"/>
    <property type="match status" value="1"/>
</dbReference>
<dbReference type="FunFam" id="1.10.510.10:FF:000115">
    <property type="entry name" value="Dual specificity mitogen-activated protein kinase kinase 1"/>
    <property type="match status" value="1"/>
</dbReference>
<dbReference type="FunFam" id="3.30.200.20:FF:000100">
    <property type="entry name" value="Dual specificity mitogen-activated protein kinase kinase 1"/>
    <property type="match status" value="1"/>
</dbReference>
<dbReference type="Gene3D" id="3.30.200.20">
    <property type="entry name" value="Phosphorylase Kinase, domain 1"/>
    <property type="match status" value="1"/>
</dbReference>
<dbReference type="Gene3D" id="1.10.510.10">
    <property type="entry name" value="Transferase(Phosphotransferase) domain 1"/>
    <property type="match status" value="1"/>
</dbReference>
<dbReference type="InterPro" id="IPR011009">
    <property type="entry name" value="Kinase-like_dom_sf"/>
</dbReference>
<dbReference type="InterPro" id="IPR050915">
    <property type="entry name" value="MAP_kinase_kinase"/>
</dbReference>
<dbReference type="InterPro" id="IPR000719">
    <property type="entry name" value="Prot_kinase_dom"/>
</dbReference>
<dbReference type="InterPro" id="IPR017441">
    <property type="entry name" value="Protein_kinase_ATP_BS"/>
</dbReference>
<dbReference type="InterPro" id="IPR008271">
    <property type="entry name" value="Ser/Thr_kinase_AS"/>
</dbReference>
<dbReference type="PANTHER" id="PTHR47448">
    <property type="entry name" value="DUAL SPECIFICITY MITOGEN-ACTIVATED PROTEIN KINASE KINASE DSOR1-LIKE PROTEIN"/>
    <property type="match status" value="1"/>
</dbReference>
<dbReference type="PANTHER" id="PTHR47448:SF2">
    <property type="entry name" value="MITOGEN-ACTIVATED PROTEIN KINASE KINASE 1"/>
    <property type="match status" value="1"/>
</dbReference>
<dbReference type="Pfam" id="PF00069">
    <property type="entry name" value="Pkinase"/>
    <property type="match status" value="1"/>
</dbReference>
<dbReference type="SMART" id="SM00220">
    <property type="entry name" value="S_TKc"/>
    <property type="match status" value="1"/>
</dbReference>
<dbReference type="SUPFAM" id="SSF56112">
    <property type="entry name" value="Protein kinase-like (PK-like)"/>
    <property type="match status" value="1"/>
</dbReference>
<dbReference type="PROSITE" id="PS00107">
    <property type="entry name" value="PROTEIN_KINASE_ATP"/>
    <property type="match status" value="1"/>
</dbReference>
<dbReference type="PROSITE" id="PS50011">
    <property type="entry name" value="PROTEIN_KINASE_DOM"/>
    <property type="match status" value="1"/>
</dbReference>
<dbReference type="PROSITE" id="PS00108">
    <property type="entry name" value="PROTEIN_KINASE_ST"/>
    <property type="match status" value="1"/>
</dbReference>
<protein>
    <recommendedName>
        <fullName>Dual specificity mitogen-activated protein kinase kinase 1</fullName>
        <shortName>MAP kinase kinase 1</shortName>
        <shortName>MAPKK 1</shortName>
        <ecNumber>2.7.12.2</ecNumber>
    </recommendedName>
    <alternativeName>
        <fullName>ERK activator kinase 1</fullName>
    </alternativeName>
    <alternativeName>
        <fullName>MAPK/ERK kinase 1</fullName>
        <shortName>MEK 1</shortName>
    </alternativeName>
</protein>
<name>MP2K1_RABIT</name>
<sequence>MPKKKPTPIQLNPAPDGSAVNGTSSAETNLEALQKKLEELELDEQQRKRLEAFLTQKQKVGELKDDDFEKISELGAGNGGVVFKVSHKPSGLVMARKLIHLEIKPAIRNQIIRELQVLHECNSPYIVGFYGAFYSDGEISICMEHMDGGSLDQVLKKAGRIPEQILGKVSIAVIKGLTYLREKHKIMHRDVKPSNILVNSRGEIKLCDFGVSGQLIDSMANSFVGTRSYMSPERLQGTHYSVQSDIWSMGLSLVEMAVGRYPIPPPDAKELELMFGCQVEGDAAETPPRPRTPGRPLSSYGMDSRPPMAIFELLDYIVNEPPPKLPSAVFSLEFQDFVNKCLIKNPAERADLKQLMVHAFIKRSDAEEVDFAGWLCSTIGLNQPSTPTHAAGV</sequence>
<gene>
    <name type="primary">MAP2K1</name>
    <name type="synonym">MEK1</name>
    <name type="synonym">PRKMK1</name>
</gene>
<organism>
    <name type="scientific">Oryctolagus cuniculus</name>
    <name type="common">Rabbit</name>
    <dbReference type="NCBI Taxonomy" id="9986"/>
    <lineage>
        <taxon>Eukaryota</taxon>
        <taxon>Metazoa</taxon>
        <taxon>Chordata</taxon>
        <taxon>Craniata</taxon>
        <taxon>Vertebrata</taxon>
        <taxon>Euteleostomi</taxon>
        <taxon>Mammalia</taxon>
        <taxon>Eutheria</taxon>
        <taxon>Euarchontoglires</taxon>
        <taxon>Glires</taxon>
        <taxon>Lagomorpha</taxon>
        <taxon>Leporidae</taxon>
        <taxon>Oryctolagus</taxon>
    </lineage>
</organism>
<comment type="function">
    <text evidence="1 4">Dual specificity protein kinase which acts as an essential component of the MAP kinase signal transduction pathway. Binding of extracellular ligands such as growth factors, cytokines and hormones to their cell-surface receptors activates RAS and this initiates RAF1 activation. RAF1 then further activates the dual-specificity protein kinases MAP2K1/MEK1 and MAP2K2/MEK2. Both MAP2K1/MEK1 and MAP2K2/MEK2 function specifically in the MAPK/ERK cascade, and catalyze the concomitant phosphorylation of a threonine and a tyrosine residue in a Thr-Glu-Tyr sequence located in the extracellular signal-regulated kinases MAPK3/ERK1 and MAPK1/ERK2, leading to their activation and further transduction of the signal within the MAPK/ERK cascade. Activates BRAF in a KSR1 or KSR2-dependent manner; by binding to KSR1 or KSR2 releases the inhibitory intramolecular interaction between KSR1 or KSR2 protein kinase and N-terminal domains which promotes KSR1 or KSR2-BRAF dimerization and BRAF activation (By similarity). Depending on the cellular context, this pathway mediates diverse biological functions such as cell growth, adhesion, survival and differentiation, predominantly through the regulation of transcription, metabolism and cytoskeletal rearrangements. One target of the MAPK/ERK cascade is peroxisome proliferator-activated receptor gamma (PPARG), a nuclear receptor that promotes differentiation and apoptosis. MAP2K1/MEK1 has been shown to export PPARG from the nucleus. The MAPK/ERK cascade is also involved in the regulation of endosomal dynamics, including lysosome processing and endosome cycling through the perinuclear recycling compartment (PNRC), as well as in the fragmentation of the Golgi apparatus during mitosis (By similarity).</text>
</comment>
<comment type="catalytic activity">
    <reaction>
        <text>L-seryl-[protein] + ATP = O-phospho-L-seryl-[protein] + ADP + H(+)</text>
        <dbReference type="Rhea" id="RHEA:17989"/>
        <dbReference type="Rhea" id="RHEA-COMP:9863"/>
        <dbReference type="Rhea" id="RHEA-COMP:11604"/>
        <dbReference type="ChEBI" id="CHEBI:15378"/>
        <dbReference type="ChEBI" id="CHEBI:29999"/>
        <dbReference type="ChEBI" id="CHEBI:30616"/>
        <dbReference type="ChEBI" id="CHEBI:83421"/>
        <dbReference type="ChEBI" id="CHEBI:456216"/>
        <dbReference type="EC" id="2.7.12.2"/>
    </reaction>
</comment>
<comment type="catalytic activity">
    <reaction>
        <text>L-threonyl-[protein] + ATP = O-phospho-L-threonyl-[protein] + ADP + H(+)</text>
        <dbReference type="Rhea" id="RHEA:46608"/>
        <dbReference type="Rhea" id="RHEA-COMP:11060"/>
        <dbReference type="Rhea" id="RHEA-COMP:11605"/>
        <dbReference type="ChEBI" id="CHEBI:15378"/>
        <dbReference type="ChEBI" id="CHEBI:30013"/>
        <dbReference type="ChEBI" id="CHEBI:30616"/>
        <dbReference type="ChEBI" id="CHEBI:61977"/>
        <dbReference type="ChEBI" id="CHEBI:456216"/>
        <dbReference type="EC" id="2.7.12.2"/>
    </reaction>
</comment>
<comment type="catalytic activity">
    <reaction>
        <text>L-tyrosyl-[protein] + ATP = O-phospho-L-tyrosyl-[protein] + ADP + H(+)</text>
        <dbReference type="Rhea" id="RHEA:10596"/>
        <dbReference type="Rhea" id="RHEA-COMP:10136"/>
        <dbReference type="Rhea" id="RHEA-COMP:20101"/>
        <dbReference type="ChEBI" id="CHEBI:15378"/>
        <dbReference type="ChEBI" id="CHEBI:30616"/>
        <dbReference type="ChEBI" id="CHEBI:46858"/>
        <dbReference type="ChEBI" id="CHEBI:61978"/>
        <dbReference type="ChEBI" id="CHEBI:456216"/>
        <dbReference type="EC" id="2.7.12.2"/>
    </reaction>
</comment>
<comment type="activity regulation">
    <text evidence="3 4">Ras proteins such as HRAS mediate the activation of RAF proteins such as RAF1 or BRAF which in turn activate extracellular signal-regulated kinases (ERK) through MAPK (mitogen-activated protein kinases) and ERK kinases MAP2K1/MEK1 and MAP2K2/MEK2. Activation occurs through phosphorylation of Ser-218 and Ser-222 (By similarity). MAP2K1/MEK1 binds KSR1 or KSR2 releasing the inhibitory intramolecular interaction between KSR1 or KSR2 protein kinase and N-terminal domains (By similarity). This allows KSR1 or KSR2 dimerization with BRAF leading to BRAF activation and phosphorylation of MAP2K1 (By similarity). MAP2K1/MEK1 is also the target of negative feed-back regulation by its substrate kinases, such as MAPK1/ERK2. These phosphorylate MAP2K1/MEK1 on Thr-292, thereby facilitating dephosphorylation of the activating residues Ser-218 and Ser-222. Inhibited by serine/threonine phosphatase 2A (By similarity).</text>
</comment>
<comment type="subunit">
    <text evidence="2 3 4 9">Found in a complex with at least BRAF, HRAS, MAP2K1, MAPK3/ERK1 and RGS14 (By similarity). Forms a heterodimer with MAP2K2/MEK2 (By similarity). Forms heterodimers with KSR2 which further dimerize to form tetramers (PubMed:21441910). Interacts with KSR1 or KSR2 and BRAF; the interaction with KSR1 or KSR2 mediates KSR1-BRAF or KSR2-BRAF dimerization (By similarity). Interacts with ARBB2, LAMTOR3, MAPK1/ERK2 and RAF1 (By similarity). Interacts with MAPK1/ERK2 (By similarity). Interacts with MORG1 (By similarity). Interacts with PPARG (By similarity). Interacts with SGK1 (By similarity). Interacts with BIRC6/bruce (By similarity). Interacts with KAT7; the interaction promotes KAT7 phosphorylation (By similarity). Interacts with RAF1 and NEK10; the interaction is required for ERK1/2-signaling pathway activation in response to UV irradiation (By similarity). Interacts with TRAF3IP3 (By similarity). Interacts with MOS (By similarity).</text>
</comment>
<comment type="interaction">
    <interactant intactId="EBI-1631983">
        <id>P29678</id>
    </interactant>
    <interactant intactId="EBI-365980">
        <id>P15056</id>
        <label>BRAF</label>
    </interactant>
    <organismsDiffer>true</organismsDiffer>
    <experiments>2</experiments>
</comment>
<comment type="interaction">
    <interactant intactId="EBI-1631983">
        <id>P29678</id>
    </interactant>
    <interactant intactId="EBI-15916808">
        <id>Q6VAB6-1</id>
        <label>KSR2</label>
    </interactant>
    <organismsDiffer>true</organismsDiffer>
    <experiments>6</experiments>
</comment>
<comment type="subcellular location">
    <subcellularLocation>
        <location evidence="4">Cytoplasm</location>
        <location evidence="4">Cytoskeleton</location>
        <location evidence="4">Microtubule organizing center</location>
        <location evidence="4">Centrosome</location>
    </subcellularLocation>
    <subcellularLocation>
        <location evidence="4">Cytoplasm</location>
        <location evidence="4">Cytoskeleton</location>
        <location evidence="4">Microtubule organizing center</location>
        <location evidence="4">Spindle pole body</location>
    </subcellularLocation>
    <subcellularLocation>
        <location evidence="4">Cytoplasm</location>
    </subcellularLocation>
    <subcellularLocation>
        <location evidence="4">Nucleus</location>
    </subcellularLocation>
    <subcellularLocation>
        <location evidence="4">Membrane</location>
        <topology evidence="4">Peripheral membrane protein</topology>
    </subcellularLocation>
    <text evidence="4">Localizes at centrosomes during prometaphase, midzone during anaphase and midbody during telophase/cytokinesis. Membrane localization is probably regulated by its interaction with KSR1.</text>
</comment>
<comment type="domain">
    <text evidence="1">The proline-rich region localized between residues 270 and 307 is important for the binding to RAF1 and activation of MAP2K1/MEK1.</text>
</comment>
<comment type="PTM">
    <text evidence="4">Phosphorylation at Ser-218 and Ser-222 by MAP kinase kinase kinases (RAF or MEKK1) positively regulates the kinase activity (By similarity). Also phosphorylated at Thr-292 by MAPK1/ERK2 and at Ser-298 by PAK (By similarity). MAPK1/ERK2 phosphorylation of Thr-292 occurs in response to cellular adhesion and leads to inhibition of Ser-298 phosphorylation by PAK (By similarity). Autophosphorylated at Ser-218 and Ser-222, autophosphosphorylation is promoted by NEK10 following UV irradiation (By similarity).</text>
</comment>
<comment type="similarity">
    <text evidence="11">Belongs to the protein kinase superfamily. STE Ser/Thr protein kinase family. MAP kinase kinase subfamily.</text>
</comment>